<comment type="function">
    <text evidence="1">Catalyzes the interconversion of beta-pyran and beta-furan forms of D-ribose.</text>
</comment>
<comment type="catalytic activity">
    <reaction evidence="1">
        <text>beta-D-ribopyranose = beta-D-ribofuranose</text>
        <dbReference type="Rhea" id="RHEA:25432"/>
        <dbReference type="ChEBI" id="CHEBI:27476"/>
        <dbReference type="ChEBI" id="CHEBI:47002"/>
        <dbReference type="EC" id="5.4.99.62"/>
    </reaction>
</comment>
<comment type="pathway">
    <text evidence="1">Carbohydrate metabolism; D-ribose degradation; D-ribose 5-phosphate from beta-D-ribopyranose: step 1/2.</text>
</comment>
<comment type="subunit">
    <text evidence="1">Homodecamer.</text>
</comment>
<comment type="subcellular location">
    <subcellularLocation>
        <location evidence="1">Cytoplasm</location>
    </subcellularLocation>
</comment>
<comment type="similarity">
    <text evidence="1">Belongs to the RbsD / FucU family. RbsD subfamily.</text>
</comment>
<organism>
    <name type="scientific">Staphylococcus aureus (strain MSSA476)</name>
    <dbReference type="NCBI Taxonomy" id="282459"/>
    <lineage>
        <taxon>Bacteria</taxon>
        <taxon>Bacillati</taxon>
        <taxon>Bacillota</taxon>
        <taxon>Bacilli</taxon>
        <taxon>Bacillales</taxon>
        <taxon>Staphylococcaceae</taxon>
        <taxon>Staphylococcus</taxon>
    </lineage>
</organism>
<gene>
    <name evidence="1" type="primary">rbsD</name>
    <name type="ordered locus">SAS0246</name>
</gene>
<name>RBSD_STAAS</name>
<sequence length="134" mass="15165">MKKSAVLNEHISKAIATIGHFDLLTINDAGMPIPNDHRRIDLAVTKNLPRFIDVLATVLEEMEIQKIYLAEEIKEHNPTQLQQIKQLISSEIEIIFIPHEEMKSNLAHPLNKGNIRTGETTPYSNIALESNVTF</sequence>
<keyword id="KW-0119">Carbohydrate metabolism</keyword>
<keyword id="KW-0963">Cytoplasm</keyword>
<keyword id="KW-0413">Isomerase</keyword>
<evidence type="ECO:0000255" key="1">
    <source>
        <dbReference type="HAMAP-Rule" id="MF_01661"/>
    </source>
</evidence>
<proteinExistence type="inferred from homology"/>
<accession>Q6GCK3</accession>
<feature type="chain" id="PRO_0000346266" description="D-ribose pyranase">
    <location>
        <begin position="1"/>
        <end position="134"/>
    </location>
</feature>
<feature type="active site" description="Proton donor" evidence="1">
    <location>
        <position position="20"/>
    </location>
</feature>
<feature type="binding site" evidence="1">
    <location>
        <position position="28"/>
    </location>
    <ligand>
        <name>substrate</name>
    </ligand>
</feature>
<feature type="binding site" evidence="1">
    <location>
        <position position="99"/>
    </location>
    <ligand>
        <name>substrate</name>
    </ligand>
</feature>
<feature type="binding site" evidence="1">
    <location>
        <begin position="123"/>
        <end position="125"/>
    </location>
    <ligand>
        <name>substrate</name>
    </ligand>
</feature>
<protein>
    <recommendedName>
        <fullName evidence="1">D-ribose pyranase</fullName>
        <ecNumber evidence="1">5.4.99.62</ecNumber>
    </recommendedName>
</protein>
<dbReference type="EC" id="5.4.99.62" evidence="1"/>
<dbReference type="EMBL" id="BX571857">
    <property type="protein sequence ID" value="CAG42016.1"/>
    <property type="molecule type" value="Genomic_DNA"/>
</dbReference>
<dbReference type="RefSeq" id="WP_000747873.1">
    <property type="nucleotide sequence ID" value="NC_002953.3"/>
</dbReference>
<dbReference type="SMR" id="Q6GCK3"/>
<dbReference type="KEGG" id="sas:SAS0246"/>
<dbReference type="HOGENOM" id="CLU_135498_0_0_9"/>
<dbReference type="UniPathway" id="UPA00916">
    <property type="reaction ID" value="UER00888"/>
</dbReference>
<dbReference type="GO" id="GO:0005829">
    <property type="term" value="C:cytosol"/>
    <property type="evidence" value="ECO:0007669"/>
    <property type="project" value="TreeGrafter"/>
</dbReference>
<dbReference type="GO" id="GO:0062193">
    <property type="term" value="F:D-ribose pyranase activity"/>
    <property type="evidence" value="ECO:0007669"/>
    <property type="project" value="UniProtKB-EC"/>
</dbReference>
<dbReference type="GO" id="GO:0016872">
    <property type="term" value="F:intramolecular lyase activity"/>
    <property type="evidence" value="ECO:0007669"/>
    <property type="project" value="UniProtKB-UniRule"/>
</dbReference>
<dbReference type="GO" id="GO:0048029">
    <property type="term" value="F:monosaccharide binding"/>
    <property type="evidence" value="ECO:0007669"/>
    <property type="project" value="InterPro"/>
</dbReference>
<dbReference type="GO" id="GO:0019303">
    <property type="term" value="P:D-ribose catabolic process"/>
    <property type="evidence" value="ECO:0007669"/>
    <property type="project" value="UniProtKB-UniRule"/>
</dbReference>
<dbReference type="FunFam" id="3.40.1650.10:FF:000004">
    <property type="entry name" value="D-ribose pyranase"/>
    <property type="match status" value="1"/>
</dbReference>
<dbReference type="Gene3D" id="3.40.1650.10">
    <property type="entry name" value="RbsD-like domain"/>
    <property type="match status" value="1"/>
</dbReference>
<dbReference type="HAMAP" id="MF_01661">
    <property type="entry name" value="D_rib_pyranase"/>
    <property type="match status" value="1"/>
</dbReference>
<dbReference type="InterPro" id="IPR023064">
    <property type="entry name" value="D-ribose_pyranase"/>
</dbReference>
<dbReference type="InterPro" id="IPR023750">
    <property type="entry name" value="RbsD-like_sf"/>
</dbReference>
<dbReference type="InterPro" id="IPR007721">
    <property type="entry name" value="RbsD_FucU"/>
</dbReference>
<dbReference type="NCBIfam" id="NF008761">
    <property type="entry name" value="PRK11797.1"/>
    <property type="match status" value="1"/>
</dbReference>
<dbReference type="PANTHER" id="PTHR37831">
    <property type="entry name" value="D-RIBOSE PYRANASE"/>
    <property type="match status" value="1"/>
</dbReference>
<dbReference type="PANTHER" id="PTHR37831:SF1">
    <property type="entry name" value="D-RIBOSE PYRANASE"/>
    <property type="match status" value="1"/>
</dbReference>
<dbReference type="Pfam" id="PF05025">
    <property type="entry name" value="RbsD_FucU"/>
    <property type="match status" value="1"/>
</dbReference>
<dbReference type="SUPFAM" id="SSF102546">
    <property type="entry name" value="RbsD-like"/>
    <property type="match status" value="1"/>
</dbReference>
<reference key="1">
    <citation type="journal article" date="2004" name="Proc. Natl. Acad. Sci. U.S.A.">
        <title>Complete genomes of two clinical Staphylococcus aureus strains: evidence for the rapid evolution of virulence and drug resistance.</title>
        <authorList>
            <person name="Holden M.T.G."/>
            <person name="Feil E.J."/>
            <person name="Lindsay J.A."/>
            <person name="Peacock S.J."/>
            <person name="Day N.P.J."/>
            <person name="Enright M.C."/>
            <person name="Foster T.J."/>
            <person name="Moore C.E."/>
            <person name="Hurst L."/>
            <person name="Atkin R."/>
            <person name="Barron A."/>
            <person name="Bason N."/>
            <person name="Bentley S.D."/>
            <person name="Chillingworth C."/>
            <person name="Chillingworth T."/>
            <person name="Churcher C."/>
            <person name="Clark L."/>
            <person name="Corton C."/>
            <person name="Cronin A."/>
            <person name="Doggett J."/>
            <person name="Dowd L."/>
            <person name="Feltwell T."/>
            <person name="Hance Z."/>
            <person name="Harris B."/>
            <person name="Hauser H."/>
            <person name="Holroyd S."/>
            <person name="Jagels K."/>
            <person name="James K.D."/>
            <person name="Lennard N."/>
            <person name="Line A."/>
            <person name="Mayes R."/>
            <person name="Moule S."/>
            <person name="Mungall K."/>
            <person name="Ormond D."/>
            <person name="Quail M.A."/>
            <person name="Rabbinowitsch E."/>
            <person name="Rutherford K.M."/>
            <person name="Sanders M."/>
            <person name="Sharp S."/>
            <person name="Simmonds M."/>
            <person name="Stevens K."/>
            <person name="Whitehead S."/>
            <person name="Barrell B.G."/>
            <person name="Spratt B.G."/>
            <person name="Parkhill J."/>
        </authorList>
    </citation>
    <scope>NUCLEOTIDE SEQUENCE [LARGE SCALE GENOMIC DNA]</scope>
    <source>
        <strain>MSSA476</strain>
    </source>
</reference>